<comment type="function">
    <text evidence="3">Transcriptional regulator; part of the gene cluster that mediates the biosynthesis of pyriculol and pyriculariol, two heptaketides that induce lesion formation upon application on rice leaves but are dispensable for pathogenicity (PubMed:27902426). With TRF1, negatively regulates the expression of the gene cluster and the subsequent pyriculol and pyriculariol production (PubMed:27902426).</text>
</comment>
<comment type="subcellular location">
    <subcellularLocation>
        <location evidence="1">Nucleus</location>
    </subcellularLocation>
</comment>
<comment type="disruption phenotype">
    <text evidence="3">Leads to increased expression of the pyriculol/pyriculariol biosynthesis cluster highly reducing polyketide synthase PKS19.</text>
</comment>
<accession>G4N2B2</accession>
<protein>
    <recommendedName>
        <fullName evidence="4">Pyriculol/pyriculariol biosynthesis cluster transcription factor 1</fullName>
    </recommendedName>
</protein>
<reference key="1">
    <citation type="journal article" date="2005" name="Nature">
        <title>The genome sequence of the rice blast fungus Magnaporthe grisea.</title>
        <authorList>
            <person name="Dean R.A."/>
            <person name="Talbot N.J."/>
            <person name="Ebbole D.J."/>
            <person name="Farman M.L."/>
            <person name="Mitchell T.K."/>
            <person name="Orbach M.J."/>
            <person name="Thon M.R."/>
            <person name="Kulkarni R."/>
            <person name="Xu J.-R."/>
            <person name="Pan H."/>
            <person name="Read N.D."/>
            <person name="Lee Y.-H."/>
            <person name="Carbone I."/>
            <person name="Brown D."/>
            <person name="Oh Y.Y."/>
            <person name="Donofrio N."/>
            <person name="Jeong J.S."/>
            <person name="Soanes D.M."/>
            <person name="Djonovic S."/>
            <person name="Kolomiets E."/>
            <person name="Rehmeyer C."/>
            <person name="Li W."/>
            <person name="Harding M."/>
            <person name="Kim S."/>
            <person name="Lebrun M.-H."/>
            <person name="Bohnert H."/>
            <person name="Coughlan S."/>
            <person name="Butler J."/>
            <person name="Calvo S.E."/>
            <person name="Ma L.-J."/>
            <person name="Nicol R."/>
            <person name="Purcell S."/>
            <person name="Nusbaum C."/>
            <person name="Galagan J.E."/>
            <person name="Birren B.W."/>
        </authorList>
    </citation>
    <scope>NUCLEOTIDE SEQUENCE [LARGE SCALE GENOMIC DNA]</scope>
    <source>
        <strain>70-15 / ATCC MYA-4617 / FGSC 8958</strain>
    </source>
</reference>
<reference key="2">
    <citation type="journal article" date="2017" name="Microbiology">
        <title>Unravelling the biosynthesis of pyriculol in the rice blast fungus Magnaporthe oryzae.</title>
        <authorList>
            <person name="Jacob S."/>
            <person name="Groetsch T."/>
            <person name="Foster A.J."/>
            <person name="Schueffler A."/>
            <person name="Rieger P.H."/>
            <person name="Sandjo L.P."/>
            <person name="Liermann J.C."/>
            <person name="Opatz T."/>
            <person name="Thines E."/>
        </authorList>
    </citation>
    <scope>IDENTIFICATION</scope>
    <scope>DISRUPTION PHENOTYPE</scope>
    <scope>FUNCTION</scope>
</reference>
<evidence type="ECO:0000255" key="1">
    <source>
        <dbReference type="PROSITE-ProRule" id="PRU00108"/>
    </source>
</evidence>
<evidence type="ECO:0000256" key="2">
    <source>
        <dbReference type="SAM" id="MobiDB-lite"/>
    </source>
</evidence>
<evidence type="ECO:0000269" key="3">
    <source>
    </source>
</evidence>
<evidence type="ECO:0000303" key="4">
    <source>
    </source>
</evidence>
<organism>
    <name type="scientific">Pyricularia oryzae (strain 70-15 / ATCC MYA-4617 / FGSC 8958)</name>
    <name type="common">Rice blast fungus</name>
    <name type="synonym">Magnaporthe oryzae</name>
    <dbReference type="NCBI Taxonomy" id="242507"/>
    <lineage>
        <taxon>Eukaryota</taxon>
        <taxon>Fungi</taxon>
        <taxon>Dikarya</taxon>
        <taxon>Ascomycota</taxon>
        <taxon>Pezizomycotina</taxon>
        <taxon>Sordariomycetes</taxon>
        <taxon>Sordariomycetidae</taxon>
        <taxon>Magnaporthales</taxon>
        <taxon>Pyriculariaceae</taxon>
        <taxon>Pyricularia</taxon>
    </lineage>
</organism>
<keyword id="KW-0238">DNA-binding</keyword>
<keyword id="KW-0371">Homeobox</keyword>
<keyword id="KW-0539">Nucleus</keyword>
<keyword id="KW-1185">Reference proteome</keyword>
<keyword id="KW-0804">Transcription</keyword>
<keyword id="KW-0805">Transcription regulation</keyword>
<feature type="chain" id="PRO_0000446272" description="Pyriculol/pyriculariol biosynthesis cluster transcription factor 1">
    <location>
        <begin position="1"/>
        <end position="625"/>
    </location>
</feature>
<feature type="DNA-binding region" description="Homeobox" evidence="1">
    <location>
        <begin position="73"/>
        <end position="132"/>
    </location>
</feature>
<feature type="region of interest" description="Disordered" evidence="2">
    <location>
        <begin position="1"/>
        <end position="83"/>
    </location>
</feature>
<feature type="region of interest" description="Disordered" evidence="2">
    <location>
        <begin position="466"/>
        <end position="496"/>
    </location>
</feature>
<feature type="compositionally biased region" description="Low complexity" evidence="2">
    <location>
        <begin position="46"/>
        <end position="59"/>
    </location>
</feature>
<feature type="compositionally biased region" description="Polar residues" evidence="2">
    <location>
        <begin position="467"/>
        <end position="496"/>
    </location>
</feature>
<proteinExistence type="inferred from homology"/>
<gene>
    <name evidence="4" type="primary">TRF2</name>
    <name type="ORF">MGG_04853</name>
</gene>
<sequence length="625" mass="67910">MATEINMPMGPGPLGEAGSLKIDTGSNMEVSIPSPVSAAPGELNETPSPSTPANPNSASRRPPRKSTLTQQQKNQKRQRATQDQLTTLEQEFAKNPTPTATVRDRIAEEINMTERSVQIWFQNRRAKIKLMAKKSLETGEDIDSIPESMRTYLAMQAMESGKGFPGAFLGRGMMPYGHGNMLMAGEQGGPSKVVIHHLTCRSLSIGKWTRVGQNTMDLIVFYSPDKCTMTYYINNEQAGYKIEYHFSCIKSICVENADDPTKVGGIVIELNRPPSFFMDQSPTSNGFFQCGDFTEDQQASQCLVHHLGGNPKVLSGQLAKLVSLESFMNRHNTMAYHPDPMAHGGMPVSAPVSPTNRPSSQPNFAQPHVGLFQESQWGISPAHHVMRGPGHKRQRSRSVPIAVDFSMLQTPMPSFYIQHPGEAQPQPHSPNIYAPVPQQPHALSPAGPGLRIDTQAGFGLDMRQYPMSATTAPSPSEYNSPSFFSQAPENTPLPASNFNTPYSSTFLSPMMNATNLNVPQSVSPISFSGGDPAIVDQSPPMSMLGRSASADIYHGGDSSAISDDGHSLNDMYSKHAITLPMHPPHSPAFVEPSQAELDMNQLVQFDTVDPSSLSPESVHQGIGGQ</sequence>
<name>TRF2_PYRO7</name>
<dbReference type="EMBL" id="CM001233">
    <property type="protein sequence ID" value="EHA52524.1"/>
    <property type="molecule type" value="Genomic_DNA"/>
</dbReference>
<dbReference type="RefSeq" id="XP_003712331.1">
    <property type="nucleotide sequence ID" value="XM_003712283.1"/>
</dbReference>
<dbReference type="SMR" id="G4N2B2"/>
<dbReference type="STRING" id="242507.G4N2B2"/>
<dbReference type="EnsemblFungi" id="MGG_04853T0">
    <property type="protein sequence ID" value="MGG_04853T0"/>
    <property type="gene ID" value="MGG_04853"/>
</dbReference>
<dbReference type="GeneID" id="2675295"/>
<dbReference type="KEGG" id="mgr:MGG_04853"/>
<dbReference type="VEuPathDB" id="FungiDB:MGG_04853"/>
<dbReference type="eggNOG" id="KOG0849">
    <property type="taxonomic scope" value="Eukaryota"/>
</dbReference>
<dbReference type="HOGENOM" id="CLU_023524_1_0_1"/>
<dbReference type="InParanoid" id="G4N2B2"/>
<dbReference type="OMA" id="SHADPMI"/>
<dbReference type="OrthoDB" id="6159439at2759"/>
<dbReference type="PHI-base" id="PHI:2128"/>
<dbReference type="Proteomes" id="UP000009058">
    <property type="component" value="Chromosome 3"/>
</dbReference>
<dbReference type="GO" id="GO:0005634">
    <property type="term" value="C:nucleus"/>
    <property type="evidence" value="ECO:0007669"/>
    <property type="project" value="UniProtKB-SubCell"/>
</dbReference>
<dbReference type="GO" id="GO:0000981">
    <property type="term" value="F:DNA-binding transcription factor activity, RNA polymerase II-specific"/>
    <property type="evidence" value="ECO:0007669"/>
    <property type="project" value="InterPro"/>
</dbReference>
<dbReference type="GO" id="GO:0000978">
    <property type="term" value="F:RNA polymerase II cis-regulatory region sequence-specific DNA binding"/>
    <property type="evidence" value="ECO:0007669"/>
    <property type="project" value="TreeGrafter"/>
</dbReference>
<dbReference type="GO" id="GO:0030154">
    <property type="term" value="P:cell differentiation"/>
    <property type="evidence" value="ECO:0007669"/>
    <property type="project" value="TreeGrafter"/>
</dbReference>
<dbReference type="CDD" id="cd00086">
    <property type="entry name" value="homeodomain"/>
    <property type="match status" value="1"/>
</dbReference>
<dbReference type="Gene3D" id="1.10.10.60">
    <property type="entry name" value="Homeodomain-like"/>
    <property type="match status" value="1"/>
</dbReference>
<dbReference type="InterPro" id="IPR001356">
    <property type="entry name" value="HD"/>
</dbReference>
<dbReference type="InterPro" id="IPR017970">
    <property type="entry name" value="Homeobox_CS"/>
</dbReference>
<dbReference type="InterPro" id="IPR051000">
    <property type="entry name" value="Homeobox_DNA-bind_prot"/>
</dbReference>
<dbReference type="InterPro" id="IPR009057">
    <property type="entry name" value="Homeodomain-like_sf"/>
</dbReference>
<dbReference type="PANTHER" id="PTHR24324:SF5">
    <property type="entry name" value="HEMATOPOIETICALLY-EXPRESSED HOMEOBOX PROTEIN HHEX"/>
    <property type="match status" value="1"/>
</dbReference>
<dbReference type="PANTHER" id="PTHR24324">
    <property type="entry name" value="HOMEOBOX PROTEIN HHEX"/>
    <property type="match status" value="1"/>
</dbReference>
<dbReference type="Pfam" id="PF00046">
    <property type="entry name" value="Homeodomain"/>
    <property type="match status" value="1"/>
</dbReference>
<dbReference type="Pfam" id="PF24818">
    <property type="entry name" value="PH_TRF2_HOY1"/>
    <property type="match status" value="1"/>
</dbReference>
<dbReference type="SMART" id="SM00389">
    <property type="entry name" value="HOX"/>
    <property type="match status" value="1"/>
</dbReference>
<dbReference type="SUPFAM" id="SSF46689">
    <property type="entry name" value="Homeodomain-like"/>
    <property type="match status" value="1"/>
</dbReference>
<dbReference type="PROSITE" id="PS00027">
    <property type="entry name" value="HOMEOBOX_1"/>
    <property type="match status" value="1"/>
</dbReference>
<dbReference type="PROSITE" id="PS50071">
    <property type="entry name" value="HOMEOBOX_2"/>
    <property type="match status" value="1"/>
</dbReference>